<evidence type="ECO:0000250" key="1">
    <source>
        <dbReference type="UniProtKB" id="K7IM66"/>
    </source>
</evidence>
<evidence type="ECO:0000255" key="2">
    <source>
        <dbReference type="HAMAP-Rule" id="MF_03003"/>
    </source>
</evidence>
<evidence type="ECO:0000256" key="3">
    <source>
        <dbReference type="SAM" id="MobiDB-lite"/>
    </source>
</evidence>
<reference key="1">
    <citation type="journal article" date="2005" name="Nature">
        <title>The genome sequence of the rice blast fungus Magnaporthe grisea.</title>
        <authorList>
            <person name="Dean R.A."/>
            <person name="Talbot N.J."/>
            <person name="Ebbole D.J."/>
            <person name="Farman M.L."/>
            <person name="Mitchell T.K."/>
            <person name="Orbach M.J."/>
            <person name="Thon M.R."/>
            <person name="Kulkarni R."/>
            <person name="Xu J.-R."/>
            <person name="Pan H."/>
            <person name="Read N.D."/>
            <person name="Lee Y.-H."/>
            <person name="Carbone I."/>
            <person name="Brown D."/>
            <person name="Oh Y.Y."/>
            <person name="Donofrio N."/>
            <person name="Jeong J.S."/>
            <person name="Soanes D.M."/>
            <person name="Djonovic S."/>
            <person name="Kolomiets E."/>
            <person name="Rehmeyer C."/>
            <person name="Li W."/>
            <person name="Harding M."/>
            <person name="Kim S."/>
            <person name="Lebrun M.-H."/>
            <person name="Bohnert H."/>
            <person name="Coughlan S."/>
            <person name="Butler J."/>
            <person name="Calvo S.E."/>
            <person name="Ma L.-J."/>
            <person name="Nicol R."/>
            <person name="Purcell S."/>
            <person name="Nusbaum C."/>
            <person name="Galagan J.E."/>
            <person name="Birren B.W."/>
        </authorList>
    </citation>
    <scope>NUCLEOTIDE SEQUENCE [LARGE SCALE GENOMIC DNA]</scope>
    <source>
        <strain>70-15 / ATCC MYA-4617 / FGSC 8958</strain>
    </source>
</reference>
<organism>
    <name type="scientific">Pyricularia oryzae (strain 70-15 / ATCC MYA-4617 / FGSC 8958)</name>
    <name type="common">Rice blast fungus</name>
    <name type="synonym">Magnaporthe oryzae</name>
    <dbReference type="NCBI Taxonomy" id="242507"/>
    <lineage>
        <taxon>Eukaryota</taxon>
        <taxon>Fungi</taxon>
        <taxon>Dikarya</taxon>
        <taxon>Ascomycota</taxon>
        <taxon>Pezizomycotina</taxon>
        <taxon>Sordariomycetes</taxon>
        <taxon>Sordariomycetidae</taxon>
        <taxon>Magnaporthales</taxon>
        <taxon>Pyriculariaceae</taxon>
        <taxon>Pyricularia</taxon>
    </lineage>
</organism>
<feature type="chain" id="PRO_0000364176" description="Eukaryotic translation initiation factor 3 subunit D">
    <location>
        <begin position="1"/>
        <end position="573"/>
    </location>
</feature>
<feature type="region of interest" description="Disordered" evidence="3">
    <location>
        <begin position="111"/>
        <end position="162"/>
    </location>
</feature>
<feature type="region of interest" description="RNA gate" evidence="1">
    <location>
        <begin position="301"/>
        <end position="315"/>
    </location>
</feature>
<feature type="region of interest" description="Disordered" evidence="3">
    <location>
        <begin position="552"/>
        <end position="573"/>
    </location>
</feature>
<feature type="compositionally biased region" description="Gly residues" evidence="3">
    <location>
        <begin position="136"/>
        <end position="156"/>
    </location>
</feature>
<feature type="compositionally biased region" description="Acidic residues" evidence="3">
    <location>
        <begin position="556"/>
        <end position="573"/>
    </location>
</feature>
<keyword id="KW-0963">Cytoplasm</keyword>
<keyword id="KW-0396">Initiation factor</keyword>
<keyword id="KW-0648">Protein biosynthesis</keyword>
<keyword id="KW-1185">Reference proteome</keyword>
<keyword id="KW-0694">RNA-binding</keyword>
<dbReference type="EMBL" id="CM001235">
    <property type="protein sequence ID" value="EHA49157.1"/>
    <property type="molecule type" value="Genomic_DNA"/>
</dbReference>
<dbReference type="RefSeq" id="XP_003718741.1">
    <property type="nucleotide sequence ID" value="XM_003718693.1"/>
</dbReference>
<dbReference type="SMR" id="A4RFH6"/>
<dbReference type="STRING" id="242507.A4RFH6"/>
<dbReference type="EnsemblFungi" id="MGG_00341T0">
    <property type="protein sequence ID" value="MGG_00341T0"/>
    <property type="gene ID" value="MGG_00341"/>
</dbReference>
<dbReference type="GeneID" id="2674990"/>
<dbReference type="KEGG" id="mgr:MGG_00341"/>
<dbReference type="VEuPathDB" id="FungiDB:MGG_00341"/>
<dbReference type="eggNOG" id="KOG2479">
    <property type="taxonomic scope" value="Eukaryota"/>
</dbReference>
<dbReference type="HOGENOM" id="CLU_024521_2_0_1"/>
<dbReference type="InParanoid" id="A4RFH6"/>
<dbReference type="OMA" id="FMDKRDN"/>
<dbReference type="OrthoDB" id="16538at2759"/>
<dbReference type="Proteomes" id="UP000009058">
    <property type="component" value="Chromosome 5"/>
</dbReference>
<dbReference type="GO" id="GO:0005829">
    <property type="term" value="C:cytosol"/>
    <property type="evidence" value="ECO:0007669"/>
    <property type="project" value="EnsemblFungi"/>
</dbReference>
<dbReference type="GO" id="GO:0016282">
    <property type="term" value="C:eukaryotic 43S preinitiation complex"/>
    <property type="evidence" value="ECO:0007669"/>
    <property type="project" value="UniProtKB-UniRule"/>
</dbReference>
<dbReference type="GO" id="GO:0033290">
    <property type="term" value="C:eukaryotic 48S preinitiation complex"/>
    <property type="evidence" value="ECO:0007669"/>
    <property type="project" value="UniProtKB-UniRule"/>
</dbReference>
<dbReference type="GO" id="GO:0071540">
    <property type="term" value="C:eukaryotic translation initiation factor 3 complex, eIF3e"/>
    <property type="evidence" value="ECO:0007669"/>
    <property type="project" value="EnsemblFungi"/>
</dbReference>
<dbReference type="GO" id="GO:0071541">
    <property type="term" value="C:eukaryotic translation initiation factor 3 complex, eIF3m"/>
    <property type="evidence" value="ECO:0007669"/>
    <property type="project" value="EnsemblFungi"/>
</dbReference>
<dbReference type="GO" id="GO:0098808">
    <property type="term" value="F:mRNA cap binding"/>
    <property type="evidence" value="ECO:0007669"/>
    <property type="project" value="UniProtKB-UniRule"/>
</dbReference>
<dbReference type="GO" id="GO:0003743">
    <property type="term" value="F:translation initiation factor activity"/>
    <property type="evidence" value="ECO:0007669"/>
    <property type="project" value="UniProtKB-UniRule"/>
</dbReference>
<dbReference type="GO" id="GO:0002191">
    <property type="term" value="P:cap-dependent translational initiation"/>
    <property type="evidence" value="ECO:0007669"/>
    <property type="project" value="UniProtKB-UniRule"/>
</dbReference>
<dbReference type="GO" id="GO:0001732">
    <property type="term" value="P:formation of cytoplasmic translation initiation complex"/>
    <property type="evidence" value="ECO:0007669"/>
    <property type="project" value="UniProtKB-UniRule"/>
</dbReference>
<dbReference type="HAMAP" id="MF_03003">
    <property type="entry name" value="eIF3d"/>
    <property type="match status" value="1"/>
</dbReference>
<dbReference type="InterPro" id="IPR007783">
    <property type="entry name" value="eIF3d"/>
</dbReference>
<dbReference type="PANTHER" id="PTHR12399">
    <property type="entry name" value="EUKARYOTIC TRANSLATION INITIATION FACTOR 3 SUBUNIT 7"/>
    <property type="match status" value="1"/>
</dbReference>
<dbReference type="PANTHER" id="PTHR12399:SF0">
    <property type="entry name" value="EUKARYOTIC TRANSLATION INITIATION FACTOR 3 SUBUNIT D"/>
    <property type="match status" value="1"/>
</dbReference>
<dbReference type="Pfam" id="PF05091">
    <property type="entry name" value="eIF-3_zeta"/>
    <property type="match status" value="1"/>
</dbReference>
<dbReference type="PIRSF" id="PIRSF016281">
    <property type="entry name" value="EIF-3_zeta"/>
    <property type="match status" value="1"/>
</dbReference>
<comment type="function">
    <text evidence="2">mRNA cap-binding component of the eukaryotic translation initiation factor 3 (eIF-3) complex, which is involved in protein synthesis of a specialized repertoire of mRNAs and, together with other initiation factors, stimulates binding of mRNA and methionyl-tRNAi to the 40S ribosome. The eIF-3 complex specifically targets and initiates translation of a subset of mRNAs involved in cell proliferation. In the eIF-3 complex, eif3d specifically recognizes and binds the 7-methylguanosine cap of a subset of mRNAs.</text>
</comment>
<comment type="subunit">
    <text evidence="2">Component of the eukaryotic translation initiation factor 3 (eIF-3) complex.</text>
</comment>
<comment type="subcellular location">
    <subcellularLocation>
        <location evidence="2">Cytoplasm</location>
    </subcellularLocation>
</comment>
<comment type="domain">
    <text evidence="2">The RNA gate region regulates mRNA cap recognition to prevent promiscuous mRNA-binding before assembly of eif3d into the full eukaryotic translation initiation factor 3 (eIF-3) complex.</text>
</comment>
<comment type="similarity">
    <text evidence="2">Belongs to the eIF-3 subunit D family.</text>
</comment>
<name>EIF3D_PYRO7</name>
<gene>
    <name type="ORF">MGG_00341</name>
</gene>
<proteinExistence type="inferred from homology"/>
<protein>
    <recommendedName>
        <fullName evidence="2">Eukaryotic translation initiation factor 3 subunit D</fullName>
        <shortName evidence="2">eIF3d</shortName>
    </recommendedName>
</protein>
<accession>A4RFH6</accession>
<accession>G4NCR3</accession>
<sequence length="573" mass="63208">MSQSLADIIAALPDGDGWGPAVTTELTLNGVPYAPFSKGDKLGRMADWTDGKDRDGRGGRQQYNRNFRDQQVYGAGTASLFSAPQAEDESTFSVVSNVRDSTKTRFGRGAVFTRGGRGQRGARGTERGGRAQLSRGRGGQYGGGYDRGGRSAAGGRGGRRFGWKDYDKPARNRDASINVKADWSLLEEIDFNRLGKLNLDADEGEDVDSYGFVHYYDRSYDKPAVKSAERKLNPIDRAAYNVTTSLDPVIQELAEKDEATIFATDNILSTLMCAPRSVYPWDIVIVKQGSKVYFDKRDNAALDMVTVNENAVDAPLEASEGSKDSINQPSALAEEATYINHNFVNQVVIENESQKVDMEHENPFYNAAEETEPPASKAYKYRKFDLSTNDEGPVYLVVRTELDAVQKNSNNGEDQFLTVRALNEFDNKAQGSGGALDWRSKLVSQRGAVVATEMKNNSCKLAKWTVQSILAKADVLKLGFVSRANPKSNDKHVILGVIGWKPKDFANQMNLHLSNGWGIVRTIADMCLKREDGKYVLVKDPNKTILRLYEVPAGGLDEEEDNGDLGQEEDDEE</sequence>